<keyword id="KW-1185">Reference proteome</keyword>
<keyword id="KW-0687">Ribonucleoprotein</keyword>
<keyword id="KW-0689">Ribosomal protein</keyword>
<keyword id="KW-0694">RNA-binding</keyword>
<keyword id="KW-0699">rRNA-binding</keyword>
<accession>Q6ME52</accession>
<gene>
    <name evidence="1" type="primary">rplX</name>
    <name type="ordered locus">pc0423</name>
</gene>
<dbReference type="EMBL" id="BX908798">
    <property type="protein sequence ID" value="CAF23147.1"/>
    <property type="molecule type" value="Genomic_DNA"/>
</dbReference>
<dbReference type="RefSeq" id="WP_011174973.1">
    <property type="nucleotide sequence ID" value="NC_005861.2"/>
</dbReference>
<dbReference type="SMR" id="Q6ME52"/>
<dbReference type="STRING" id="264201.pc0423"/>
<dbReference type="KEGG" id="pcu:PC_RS02065"/>
<dbReference type="eggNOG" id="COG0198">
    <property type="taxonomic scope" value="Bacteria"/>
</dbReference>
<dbReference type="HOGENOM" id="CLU_093315_2_1_0"/>
<dbReference type="OrthoDB" id="9807419at2"/>
<dbReference type="Proteomes" id="UP000000529">
    <property type="component" value="Chromosome"/>
</dbReference>
<dbReference type="GO" id="GO:1990904">
    <property type="term" value="C:ribonucleoprotein complex"/>
    <property type="evidence" value="ECO:0007669"/>
    <property type="project" value="UniProtKB-KW"/>
</dbReference>
<dbReference type="GO" id="GO:0005840">
    <property type="term" value="C:ribosome"/>
    <property type="evidence" value="ECO:0007669"/>
    <property type="project" value="UniProtKB-KW"/>
</dbReference>
<dbReference type="GO" id="GO:0019843">
    <property type="term" value="F:rRNA binding"/>
    <property type="evidence" value="ECO:0007669"/>
    <property type="project" value="UniProtKB-UniRule"/>
</dbReference>
<dbReference type="GO" id="GO:0003735">
    <property type="term" value="F:structural constituent of ribosome"/>
    <property type="evidence" value="ECO:0007669"/>
    <property type="project" value="InterPro"/>
</dbReference>
<dbReference type="GO" id="GO:0006412">
    <property type="term" value="P:translation"/>
    <property type="evidence" value="ECO:0007669"/>
    <property type="project" value="UniProtKB-UniRule"/>
</dbReference>
<dbReference type="CDD" id="cd06089">
    <property type="entry name" value="KOW_RPL26"/>
    <property type="match status" value="1"/>
</dbReference>
<dbReference type="Gene3D" id="2.30.30.30">
    <property type="match status" value="1"/>
</dbReference>
<dbReference type="HAMAP" id="MF_01326_B">
    <property type="entry name" value="Ribosomal_uL24_B"/>
    <property type="match status" value="1"/>
</dbReference>
<dbReference type="InterPro" id="IPR014722">
    <property type="entry name" value="Rib_uL2_dom2"/>
</dbReference>
<dbReference type="InterPro" id="IPR003256">
    <property type="entry name" value="Ribosomal_uL24"/>
</dbReference>
<dbReference type="InterPro" id="IPR041988">
    <property type="entry name" value="Ribosomal_uL24_KOW"/>
</dbReference>
<dbReference type="InterPro" id="IPR008991">
    <property type="entry name" value="Translation_prot_SH3-like_sf"/>
</dbReference>
<dbReference type="NCBIfam" id="TIGR01079">
    <property type="entry name" value="rplX_bact"/>
    <property type="match status" value="1"/>
</dbReference>
<dbReference type="PANTHER" id="PTHR12903">
    <property type="entry name" value="MITOCHONDRIAL RIBOSOMAL PROTEIN L24"/>
    <property type="match status" value="1"/>
</dbReference>
<dbReference type="Pfam" id="PF17136">
    <property type="entry name" value="ribosomal_L24"/>
    <property type="match status" value="1"/>
</dbReference>
<dbReference type="SUPFAM" id="SSF50104">
    <property type="entry name" value="Translation proteins SH3-like domain"/>
    <property type="match status" value="1"/>
</dbReference>
<reference key="1">
    <citation type="journal article" date="2004" name="Science">
        <title>Illuminating the evolutionary history of chlamydiae.</title>
        <authorList>
            <person name="Horn M."/>
            <person name="Collingro A."/>
            <person name="Schmitz-Esser S."/>
            <person name="Beier C.L."/>
            <person name="Purkhold U."/>
            <person name="Fartmann B."/>
            <person name="Brandt P."/>
            <person name="Nyakatura G.J."/>
            <person name="Droege M."/>
            <person name="Frishman D."/>
            <person name="Rattei T."/>
            <person name="Mewes H.-W."/>
            <person name="Wagner M."/>
        </authorList>
    </citation>
    <scope>NUCLEOTIDE SEQUENCE [LARGE SCALE GENOMIC DNA]</scope>
    <source>
        <strain>UWE25</strain>
    </source>
</reference>
<comment type="function">
    <text evidence="1">One of two assembly initiator proteins, it binds directly to the 5'-end of the 23S rRNA, where it nucleates assembly of the 50S subunit.</text>
</comment>
<comment type="function">
    <text evidence="1">One of the proteins that surrounds the polypeptide exit tunnel on the outside of the subunit.</text>
</comment>
<comment type="subunit">
    <text evidence="1">Part of the 50S ribosomal subunit.</text>
</comment>
<comment type="similarity">
    <text evidence="1">Belongs to the universal ribosomal protein uL24 family.</text>
</comment>
<sequence>MDNKPSGSKKIRQGDTVVAIAGNSRGQIGTVQSCKGDRVIVQGLNVRKKHVKRSQEAPKGRIVEIERPIHISNLKVCVEGETTAKLKVRTNEQGHRQFVYHKDDQEVVYRSVKKPK</sequence>
<feature type="chain" id="PRO_0000241632" description="Large ribosomal subunit protein uL24">
    <location>
        <begin position="1"/>
        <end position="116"/>
    </location>
</feature>
<organism>
    <name type="scientific">Protochlamydia amoebophila (strain UWE25)</name>
    <dbReference type="NCBI Taxonomy" id="264201"/>
    <lineage>
        <taxon>Bacteria</taxon>
        <taxon>Pseudomonadati</taxon>
        <taxon>Chlamydiota</taxon>
        <taxon>Chlamydiia</taxon>
        <taxon>Parachlamydiales</taxon>
        <taxon>Parachlamydiaceae</taxon>
        <taxon>Candidatus Protochlamydia</taxon>
    </lineage>
</organism>
<protein>
    <recommendedName>
        <fullName evidence="1">Large ribosomal subunit protein uL24</fullName>
    </recommendedName>
    <alternativeName>
        <fullName evidence="2">50S ribosomal protein L24</fullName>
    </alternativeName>
</protein>
<evidence type="ECO:0000255" key="1">
    <source>
        <dbReference type="HAMAP-Rule" id="MF_01326"/>
    </source>
</evidence>
<evidence type="ECO:0000305" key="2"/>
<proteinExistence type="inferred from homology"/>
<name>RL24_PARUW</name>